<sequence>MPGKIAVEVAYALPEKQYLQRVTLQEGATVEEAIRASGLLELRTDIDLTKNKVGIYSRPAKLSDSVHDGDRVEIYRPLIADPKELRRQRAEKSANK</sequence>
<proteinExistence type="inferred from homology"/>
<name>RNFH_ECO24</name>
<evidence type="ECO:0000255" key="1">
    <source>
        <dbReference type="HAMAP-Rule" id="MF_00460"/>
    </source>
</evidence>
<comment type="similarity">
    <text evidence="1">Belongs to the UPF0125 (RnfH) family.</text>
</comment>
<keyword id="KW-1185">Reference proteome</keyword>
<reference key="1">
    <citation type="journal article" date="2008" name="J. Bacteriol.">
        <title>The pangenome structure of Escherichia coli: comparative genomic analysis of E. coli commensal and pathogenic isolates.</title>
        <authorList>
            <person name="Rasko D.A."/>
            <person name="Rosovitz M.J."/>
            <person name="Myers G.S.A."/>
            <person name="Mongodin E.F."/>
            <person name="Fricke W.F."/>
            <person name="Gajer P."/>
            <person name="Crabtree J."/>
            <person name="Sebaihia M."/>
            <person name="Thomson N.R."/>
            <person name="Chaudhuri R."/>
            <person name="Henderson I.R."/>
            <person name="Sperandio V."/>
            <person name="Ravel J."/>
        </authorList>
    </citation>
    <scope>NUCLEOTIDE SEQUENCE [LARGE SCALE GENOMIC DNA]</scope>
    <source>
        <strain>E24377A / ETEC</strain>
    </source>
</reference>
<gene>
    <name evidence="1" type="primary">rnfH</name>
    <name type="ordered locus">EcE24377A_2902</name>
</gene>
<feature type="chain" id="PRO_1000060332" description="Protein RnfH">
    <location>
        <begin position="1"/>
        <end position="96"/>
    </location>
</feature>
<organism>
    <name type="scientific">Escherichia coli O139:H28 (strain E24377A / ETEC)</name>
    <dbReference type="NCBI Taxonomy" id="331111"/>
    <lineage>
        <taxon>Bacteria</taxon>
        <taxon>Pseudomonadati</taxon>
        <taxon>Pseudomonadota</taxon>
        <taxon>Gammaproteobacteria</taxon>
        <taxon>Enterobacterales</taxon>
        <taxon>Enterobacteriaceae</taxon>
        <taxon>Escherichia</taxon>
    </lineage>
</organism>
<protein>
    <recommendedName>
        <fullName evidence="1">Protein RnfH</fullName>
    </recommendedName>
</protein>
<accession>A7ZQ58</accession>
<dbReference type="EMBL" id="CP000800">
    <property type="protein sequence ID" value="ABV18092.1"/>
    <property type="molecule type" value="Genomic_DNA"/>
</dbReference>
<dbReference type="RefSeq" id="WP_001117838.1">
    <property type="nucleotide sequence ID" value="NC_009801.1"/>
</dbReference>
<dbReference type="SMR" id="A7ZQ58"/>
<dbReference type="KEGG" id="ecw:EcE24377A_2902"/>
<dbReference type="HOGENOM" id="CLU_150721_1_0_6"/>
<dbReference type="Proteomes" id="UP000001122">
    <property type="component" value="Chromosome"/>
</dbReference>
<dbReference type="Gene3D" id="3.10.20.280">
    <property type="entry name" value="RnfH-like"/>
    <property type="match status" value="1"/>
</dbReference>
<dbReference type="HAMAP" id="MF_00460">
    <property type="entry name" value="UPF0125_RnfH"/>
    <property type="match status" value="1"/>
</dbReference>
<dbReference type="InterPro" id="IPR016155">
    <property type="entry name" value="Mopterin_synth/thiamin_S_b"/>
</dbReference>
<dbReference type="InterPro" id="IPR005346">
    <property type="entry name" value="RnfH"/>
</dbReference>
<dbReference type="InterPro" id="IPR037021">
    <property type="entry name" value="RnfH_sf"/>
</dbReference>
<dbReference type="NCBIfam" id="NF002490">
    <property type="entry name" value="PRK01777.1"/>
    <property type="match status" value="1"/>
</dbReference>
<dbReference type="PANTHER" id="PTHR37483">
    <property type="entry name" value="UPF0125 PROTEIN RATB"/>
    <property type="match status" value="1"/>
</dbReference>
<dbReference type="PANTHER" id="PTHR37483:SF1">
    <property type="entry name" value="UPF0125 PROTEIN RATB"/>
    <property type="match status" value="1"/>
</dbReference>
<dbReference type="Pfam" id="PF03658">
    <property type="entry name" value="Ub-RnfH"/>
    <property type="match status" value="1"/>
</dbReference>
<dbReference type="SUPFAM" id="SSF54285">
    <property type="entry name" value="MoaD/ThiS"/>
    <property type="match status" value="1"/>
</dbReference>